<accession>Q114D7</accession>
<dbReference type="EMBL" id="CP000393">
    <property type="protein sequence ID" value="ABG51137.1"/>
    <property type="molecule type" value="Genomic_DNA"/>
</dbReference>
<dbReference type="RefSeq" id="WP_011611510.1">
    <property type="nucleotide sequence ID" value="NC_008312.1"/>
</dbReference>
<dbReference type="SMR" id="Q114D7"/>
<dbReference type="STRING" id="203124.Tery_1881"/>
<dbReference type="KEGG" id="ter:Tery_1881"/>
<dbReference type="eggNOG" id="COG0291">
    <property type="taxonomic scope" value="Bacteria"/>
</dbReference>
<dbReference type="HOGENOM" id="CLU_169643_4_0_3"/>
<dbReference type="OrthoDB" id="47476at2"/>
<dbReference type="GO" id="GO:0022625">
    <property type="term" value="C:cytosolic large ribosomal subunit"/>
    <property type="evidence" value="ECO:0007669"/>
    <property type="project" value="TreeGrafter"/>
</dbReference>
<dbReference type="GO" id="GO:0003735">
    <property type="term" value="F:structural constituent of ribosome"/>
    <property type="evidence" value="ECO:0007669"/>
    <property type="project" value="InterPro"/>
</dbReference>
<dbReference type="GO" id="GO:0006412">
    <property type="term" value="P:translation"/>
    <property type="evidence" value="ECO:0007669"/>
    <property type="project" value="UniProtKB-UniRule"/>
</dbReference>
<dbReference type="FunFam" id="4.10.410.60:FF:000001">
    <property type="entry name" value="50S ribosomal protein L35"/>
    <property type="match status" value="1"/>
</dbReference>
<dbReference type="Gene3D" id="4.10.410.60">
    <property type="match status" value="1"/>
</dbReference>
<dbReference type="HAMAP" id="MF_00514">
    <property type="entry name" value="Ribosomal_bL35"/>
    <property type="match status" value="1"/>
</dbReference>
<dbReference type="InterPro" id="IPR001706">
    <property type="entry name" value="Ribosomal_bL35"/>
</dbReference>
<dbReference type="InterPro" id="IPR021137">
    <property type="entry name" value="Ribosomal_bL35-like"/>
</dbReference>
<dbReference type="InterPro" id="IPR018265">
    <property type="entry name" value="Ribosomal_bL35_CS"/>
</dbReference>
<dbReference type="InterPro" id="IPR037229">
    <property type="entry name" value="Ribosomal_bL35_sf"/>
</dbReference>
<dbReference type="NCBIfam" id="TIGR00001">
    <property type="entry name" value="rpmI_bact"/>
    <property type="match status" value="1"/>
</dbReference>
<dbReference type="PANTHER" id="PTHR33343">
    <property type="entry name" value="54S RIBOSOMAL PROTEIN BL35M"/>
    <property type="match status" value="1"/>
</dbReference>
<dbReference type="PANTHER" id="PTHR33343:SF1">
    <property type="entry name" value="LARGE RIBOSOMAL SUBUNIT PROTEIN BL35M"/>
    <property type="match status" value="1"/>
</dbReference>
<dbReference type="Pfam" id="PF01632">
    <property type="entry name" value="Ribosomal_L35p"/>
    <property type="match status" value="1"/>
</dbReference>
<dbReference type="PRINTS" id="PR00064">
    <property type="entry name" value="RIBOSOMALL35"/>
</dbReference>
<dbReference type="SUPFAM" id="SSF143034">
    <property type="entry name" value="L35p-like"/>
    <property type="match status" value="1"/>
</dbReference>
<dbReference type="PROSITE" id="PS00936">
    <property type="entry name" value="RIBOSOMAL_L35"/>
    <property type="match status" value="1"/>
</dbReference>
<feature type="chain" id="PRO_1000050786" description="Large ribosomal subunit protein bL35">
    <location>
        <begin position="1"/>
        <end position="65"/>
    </location>
</feature>
<feature type="region of interest" description="Disordered" evidence="2">
    <location>
        <begin position="1"/>
        <end position="28"/>
    </location>
</feature>
<evidence type="ECO:0000255" key="1">
    <source>
        <dbReference type="HAMAP-Rule" id="MF_00514"/>
    </source>
</evidence>
<evidence type="ECO:0000256" key="2">
    <source>
        <dbReference type="SAM" id="MobiDB-lite"/>
    </source>
</evidence>
<evidence type="ECO:0000305" key="3"/>
<keyword id="KW-0687">Ribonucleoprotein</keyword>
<keyword id="KW-0689">Ribosomal protein</keyword>
<comment type="similarity">
    <text evidence="1">Belongs to the bacterial ribosomal protein bL35 family.</text>
</comment>
<sequence length="65" mass="7547">MPKLKTRKAAARRFKATGSGKIKRRKAFKSHLLEHKSSTRKNNLSKTTLVHKTNEENVRLMIPYL</sequence>
<name>RL35_TRIEI</name>
<protein>
    <recommendedName>
        <fullName evidence="1">Large ribosomal subunit protein bL35</fullName>
    </recommendedName>
    <alternativeName>
        <fullName evidence="3">50S ribosomal protein L35</fullName>
    </alternativeName>
</protein>
<reference key="1">
    <citation type="journal article" date="2015" name="Proc. Natl. Acad. Sci. U.S.A.">
        <title>Trichodesmium genome maintains abundant, widespread noncoding DNA in situ, despite oligotrophic lifestyle.</title>
        <authorList>
            <person name="Walworth N."/>
            <person name="Pfreundt U."/>
            <person name="Nelson W.C."/>
            <person name="Mincer T."/>
            <person name="Heidelberg J.F."/>
            <person name="Fu F."/>
            <person name="Waterbury J.B."/>
            <person name="Glavina del Rio T."/>
            <person name="Goodwin L."/>
            <person name="Kyrpides N.C."/>
            <person name="Land M.L."/>
            <person name="Woyke T."/>
            <person name="Hutchins D.A."/>
            <person name="Hess W.R."/>
            <person name="Webb E.A."/>
        </authorList>
    </citation>
    <scope>NUCLEOTIDE SEQUENCE [LARGE SCALE GENOMIC DNA]</scope>
    <source>
        <strain>IMS101</strain>
    </source>
</reference>
<organism>
    <name type="scientific">Trichodesmium erythraeum (strain IMS101)</name>
    <dbReference type="NCBI Taxonomy" id="203124"/>
    <lineage>
        <taxon>Bacteria</taxon>
        <taxon>Bacillati</taxon>
        <taxon>Cyanobacteriota</taxon>
        <taxon>Cyanophyceae</taxon>
        <taxon>Oscillatoriophycideae</taxon>
        <taxon>Oscillatoriales</taxon>
        <taxon>Microcoleaceae</taxon>
        <taxon>Trichodesmium</taxon>
    </lineage>
</organism>
<gene>
    <name evidence="1" type="primary">rpmI</name>
    <name evidence="1" type="synonym">rpl35</name>
    <name type="ordered locus">Tery_1881</name>
</gene>
<proteinExistence type="inferred from homology"/>